<keyword id="KW-0025">Alternative splicing</keyword>
<keyword id="KW-0472">Membrane</keyword>
<keyword id="KW-1185">Reference proteome</keyword>
<keyword id="KW-0812">Transmembrane</keyword>
<keyword id="KW-1133">Transmembrane helix</keyword>
<comment type="subunit">
    <text evidence="3">Interacts with NEDD4.</text>
</comment>
<comment type="interaction">
    <interactant intactId="EBI-6304006">
        <id>Q9EQG5</id>
    </interactant>
    <interactant intactId="EBI-773516">
        <id>P46935</id>
        <label>Nedd4</label>
    </interactant>
    <organismsDiffer>false</organismsDiffer>
    <experiments>3</experiments>
</comment>
<comment type="subcellular location">
    <subcellularLocation>
        <location evidence="5">Membrane</location>
        <topology evidence="5">Single-pass membrane protein</topology>
    </subcellularLocation>
</comment>
<comment type="alternative products">
    <event type="alternative splicing"/>
    <isoform>
        <id>Q9EQG5-1</id>
        <name>1</name>
        <sequence type="displayed"/>
    </isoform>
    <isoform>
        <id>Q9EQG5-2</id>
        <name>2</name>
        <sequence type="described" ref="VSP_031912"/>
    </isoform>
</comment>
<comment type="sequence caution" evidence="5">
    <conflict type="erroneous initiation">
        <sequence resource="EMBL-CDS" id="AAG44395"/>
    </conflict>
</comment>
<comment type="sequence caution" evidence="5">
    <conflict type="frameshift">
        <sequence resource="EMBL" id="AK134633"/>
    </conflict>
</comment>
<reference key="1">
    <citation type="journal article" date="2000" name="Biochem. J.">
        <title>Identification of multiple proteins expressed in murine embryos as binding partners for the WW domains of the ubiquitin-protein ligase Nedd4.</title>
        <authorList>
            <person name="Jolliffe C.N."/>
            <person name="Harvey K.F."/>
            <person name="Haines B.P."/>
            <person name="Parasivam G."/>
            <person name="Kumar S."/>
        </authorList>
    </citation>
    <scope>NUCLEOTIDE SEQUENCE [MRNA] (ISOFORM 2)</scope>
    <scope>INTERACTION WITH NEDD4</scope>
    <scope>MUTAGENESIS OF TYR-144 AND TYR-165</scope>
    <source>
        <tissue>Embryo</tissue>
    </source>
</reference>
<reference key="2">
    <citation type="journal article" date="2005" name="Science">
        <title>The transcriptional landscape of the mammalian genome.</title>
        <authorList>
            <person name="Carninci P."/>
            <person name="Kasukawa T."/>
            <person name="Katayama S."/>
            <person name="Gough J."/>
            <person name="Frith M.C."/>
            <person name="Maeda N."/>
            <person name="Oyama R."/>
            <person name="Ravasi T."/>
            <person name="Lenhard B."/>
            <person name="Wells C."/>
            <person name="Kodzius R."/>
            <person name="Shimokawa K."/>
            <person name="Bajic V.B."/>
            <person name="Brenner S.E."/>
            <person name="Batalov S."/>
            <person name="Forrest A.R."/>
            <person name="Zavolan M."/>
            <person name="Davis M.J."/>
            <person name="Wilming L.G."/>
            <person name="Aidinis V."/>
            <person name="Allen J.E."/>
            <person name="Ambesi-Impiombato A."/>
            <person name="Apweiler R."/>
            <person name="Aturaliya R.N."/>
            <person name="Bailey T.L."/>
            <person name="Bansal M."/>
            <person name="Baxter L."/>
            <person name="Beisel K.W."/>
            <person name="Bersano T."/>
            <person name="Bono H."/>
            <person name="Chalk A.M."/>
            <person name="Chiu K.P."/>
            <person name="Choudhary V."/>
            <person name="Christoffels A."/>
            <person name="Clutterbuck D.R."/>
            <person name="Crowe M.L."/>
            <person name="Dalla E."/>
            <person name="Dalrymple B.P."/>
            <person name="de Bono B."/>
            <person name="Della Gatta G."/>
            <person name="di Bernardo D."/>
            <person name="Down T."/>
            <person name="Engstrom P."/>
            <person name="Fagiolini M."/>
            <person name="Faulkner G."/>
            <person name="Fletcher C.F."/>
            <person name="Fukushima T."/>
            <person name="Furuno M."/>
            <person name="Futaki S."/>
            <person name="Gariboldi M."/>
            <person name="Georgii-Hemming P."/>
            <person name="Gingeras T.R."/>
            <person name="Gojobori T."/>
            <person name="Green R.E."/>
            <person name="Gustincich S."/>
            <person name="Harbers M."/>
            <person name="Hayashi Y."/>
            <person name="Hensch T.K."/>
            <person name="Hirokawa N."/>
            <person name="Hill D."/>
            <person name="Huminiecki L."/>
            <person name="Iacono M."/>
            <person name="Ikeo K."/>
            <person name="Iwama A."/>
            <person name="Ishikawa T."/>
            <person name="Jakt M."/>
            <person name="Kanapin A."/>
            <person name="Katoh M."/>
            <person name="Kawasawa Y."/>
            <person name="Kelso J."/>
            <person name="Kitamura H."/>
            <person name="Kitano H."/>
            <person name="Kollias G."/>
            <person name="Krishnan S.P."/>
            <person name="Kruger A."/>
            <person name="Kummerfeld S.K."/>
            <person name="Kurochkin I.V."/>
            <person name="Lareau L.F."/>
            <person name="Lazarevic D."/>
            <person name="Lipovich L."/>
            <person name="Liu J."/>
            <person name="Liuni S."/>
            <person name="McWilliam S."/>
            <person name="Madan Babu M."/>
            <person name="Madera M."/>
            <person name="Marchionni L."/>
            <person name="Matsuda H."/>
            <person name="Matsuzawa S."/>
            <person name="Miki H."/>
            <person name="Mignone F."/>
            <person name="Miyake S."/>
            <person name="Morris K."/>
            <person name="Mottagui-Tabar S."/>
            <person name="Mulder N."/>
            <person name="Nakano N."/>
            <person name="Nakauchi H."/>
            <person name="Ng P."/>
            <person name="Nilsson R."/>
            <person name="Nishiguchi S."/>
            <person name="Nishikawa S."/>
            <person name="Nori F."/>
            <person name="Ohara O."/>
            <person name="Okazaki Y."/>
            <person name="Orlando V."/>
            <person name="Pang K.C."/>
            <person name="Pavan W.J."/>
            <person name="Pavesi G."/>
            <person name="Pesole G."/>
            <person name="Petrovsky N."/>
            <person name="Piazza S."/>
            <person name="Reed J."/>
            <person name="Reid J.F."/>
            <person name="Ring B.Z."/>
            <person name="Ringwald M."/>
            <person name="Rost B."/>
            <person name="Ruan Y."/>
            <person name="Salzberg S.L."/>
            <person name="Sandelin A."/>
            <person name="Schneider C."/>
            <person name="Schoenbach C."/>
            <person name="Sekiguchi K."/>
            <person name="Semple C.A."/>
            <person name="Seno S."/>
            <person name="Sessa L."/>
            <person name="Sheng Y."/>
            <person name="Shibata Y."/>
            <person name="Shimada H."/>
            <person name="Shimada K."/>
            <person name="Silva D."/>
            <person name="Sinclair B."/>
            <person name="Sperling S."/>
            <person name="Stupka E."/>
            <person name="Sugiura K."/>
            <person name="Sultana R."/>
            <person name="Takenaka Y."/>
            <person name="Taki K."/>
            <person name="Tammoja K."/>
            <person name="Tan S.L."/>
            <person name="Tang S."/>
            <person name="Taylor M.S."/>
            <person name="Tegner J."/>
            <person name="Teichmann S.A."/>
            <person name="Ueda H.R."/>
            <person name="van Nimwegen E."/>
            <person name="Verardo R."/>
            <person name="Wei C.L."/>
            <person name="Yagi K."/>
            <person name="Yamanishi H."/>
            <person name="Zabarovsky E."/>
            <person name="Zhu S."/>
            <person name="Zimmer A."/>
            <person name="Hide W."/>
            <person name="Bult C."/>
            <person name="Grimmond S.M."/>
            <person name="Teasdale R.D."/>
            <person name="Liu E.T."/>
            <person name="Brusic V."/>
            <person name="Quackenbush J."/>
            <person name="Wahlestedt C."/>
            <person name="Mattick J.S."/>
            <person name="Hume D.A."/>
            <person name="Kai C."/>
            <person name="Sasaki D."/>
            <person name="Tomaru Y."/>
            <person name="Fukuda S."/>
            <person name="Kanamori-Katayama M."/>
            <person name="Suzuki M."/>
            <person name="Aoki J."/>
            <person name="Arakawa T."/>
            <person name="Iida J."/>
            <person name="Imamura K."/>
            <person name="Itoh M."/>
            <person name="Kato T."/>
            <person name="Kawaji H."/>
            <person name="Kawagashira N."/>
            <person name="Kawashima T."/>
            <person name="Kojima M."/>
            <person name="Kondo S."/>
            <person name="Konno H."/>
            <person name="Nakano K."/>
            <person name="Ninomiya N."/>
            <person name="Nishio T."/>
            <person name="Okada M."/>
            <person name="Plessy C."/>
            <person name="Shibata K."/>
            <person name="Shiraki T."/>
            <person name="Suzuki S."/>
            <person name="Tagami M."/>
            <person name="Waki K."/>
            <person name="Watahiki A."/>
            <person name="Okamura-Oho Y."/>
            <person name="Suzuki H."/>
            <person name="Kawai J."/>
            <person name="Hayashizaki Y."/>
        </authorList>
    </citation>
    <scope>NUCLEOTIDE SEQUENCE [LARGE SCALE MRNA]</scope>
    <source>
        <tissue>Medulla oblongata</tissue>
    </source>
</reference>
<name>BEAN1_MOUSE</name>
<protein>
    <recommendedName>
        <fullName>Protein BEAN1</fullName>
    </recommendedName>
    <alternativeName>
        <fullName>Brain-expressed protein associating with Nedd4</fullName>
        <shortName>BEAN</shortName>
    </alternativeName>
</protein>
<proteinExistence type="evidence at protein level"/>
<gene>
    <name type="primary">Bean1</name>
</gene>
<organism>
    <name type="scientific">Mus musculus</name>
    <name type="common">Mouse</name>
    <dbReference type="NCBI Taxonomy" id="10090"/>
    <lineage>
        <taxon>Eukaryota</taxon>
        <taxon>Metazoa</taxon>
        <taxon>Chordata</taxon>
        <taxon>Craniata</taxon>
        <taxon>Vertebrata</taxon>
        <taxon>Euteleostomi</taxon>
        <taxon>Mammalia</taxon>
        <taxon>Eutheria</taxon>
        <taxon>Euarchontoglires</taxon>
        <taxon>Glires</taxon>
        <taxon>Rodentia</taxon>
        <taxon>Myomorpha</taxon>
        <taxon>Muroidea</taxon>
        <taxon>Muridae</taxon>
        <taxon>Murinae</taxon>
        <taxon>Mus</taxon>
        <taxon>Mus</taxon>
    </lineage>
</organism>
<accession>Q9EQG5</accession>
<sequence length="255" mass="28538">MSFKRPCPLARYNRTSYFYPTTFSESSEHSHLLVSPVLVASAVIGVVITLSCITIIVGSIRRDRQARIQRHHHRHRRHHHHHRHRRRRHREYASGGHTHSRSSPRMPYACSPAEDWPPPLDVSSEGDVDVTVLWELYPDSPPGYEECMGPGATQLYVPTDAPPPYSMTDSCPRLNGALDSDSGQSRSHRQQEQRTQGQSRLHTVSMDTLPPYEAVCGTGSPSDLLPLPGPEPWPSNSQGSPIPTQAPMPSPERIV</sequence>
<evidence type="ECO:0000255" key="1"/>
<evidence type="ECO:0000256" key="2">
    <source>
        <dbReference type="SAM" id="MobiDB-lite"/>
    </source>
</evidence>
<evidence type="ECO:0000269" key="3">
    <source>
    </source>
</evidence>
<evidence type="ECO:0000303" key="4">
    <source>
    </source>
</evidence>
<evidence type="ECO:0000305" key="5"/>
<dbReference type="EMBL" id="AF240460">
    <property type="protein sequence ID" value="AAG44395.1"/>
    <property type="status" value="ALT_INIT"/>
    <property type="molecule type" value="mRNA"/>
</dbReference>
<dbReference type="EMBL" id="AK134633">
    <property type="status" value="NOT_ANNOTATED_CDS"/>
    <property type="molecule type" value="mRNA"/>
</dbReference>
<dbReference type="CCDS" id="CCDS52646.1">
    <molecule id="Q9EQG5-1"/>
</dbReference>
<dbReference type="RefSeq" id="NP_001135396.1">
    <molecule id="Q9EQG5-1"/>
    <property type="nucleotide sequence ID" value="NM_001141924.2"/>
</dbReference>
<dbReference type="RefSeq" id="XP_006531333.1">
    <molecule id="Q9EQG5-2"/>
    <property type="nucleotide sequence ID" value="XM_006531270.1"/>
</dbReference>
<dbReference type="RefSeq" id="XP_030099568.1">
    <molecule id="Q9EQG5-2"/>
    <property type="nucleotide sequence ID" value="XM_030243708.2"/>
</dbReference>
<dbReference type="SMR" id="Q9EQG5"/>
<dbReference type="BioGRID" id="211138">
    <property type="interactions" value="1"/>
</dbReference>
<dbReference type="FunCoup" id="Q9EQG5">
    <property type="interactions" value="2"/>
</dbReference>
<dbReference type="IntAct" id="Q9EQG5">
    <property type="interactions" value="1"/>
</dbReference>
<dbReference type="STRING" id="10090.ENSMUSP00000129403"/>
<dbReference type="PhosphoSitePlus" id="Q9EQG5"/>
<dbReference type="SwissPalm" id="Q9EQG5"/>
<dbReference type="Antibodypedia" id="65669">
    <property type="antibodies" value="82 antibodies from 16 providers"/>
</dbReference>
<dbReference type="Ensembl" id="ENSMUST00000093245.13">
    <molecule id="Q9EQG5-1"/>
    <property type="protein sequence ID" value="ENSMUSP00000090931.6"/>
    <property type="gene ID" value="ENSMUSG00000031872.15"/>
</dbReference>
<dbReference type="Ensembl" id="ENSMUST00000167633.8">
    <molecule id="Q9EQG5-1"/>
    <property type="protein sequence ID" value="ENSMUSP00000131530.2"/>
    <property type="gene ID" value="ENSMUSG00000031872.15"/>
</dbReference>
<dbReference type="Ensembl" id="ENSMUST00000213077.2">
    <molecule id="Q9EQG5-2"/>
    <property type="protein sequence ID" value="ENSMUSP00000148283.2"/>
    <property type="gene ID" value="ENSMUSG00000031872.15"/>
</dbReference>
<dbReference type="GeneID" id="65115"/>
<dbReference type="KEGG" id="mmu:65115"/>
<dbReference type="UCSC" id="uc009mzy.2">
    <molecule id="Q9EQG5-1"/>
    <property type="organism name" value="mouse"/>
</dbReference>
<dbReference type="AGR" id="MGI:1929597"/>
<dbReference type="CTD" id="146227"/>
<dbReference type="MGI" id="MGI:1929597">
    <property type="gene designation" value="Bean1"/>
</dbReference>
<dbReference type="VEuPathDB" id="HostDB:ENSMUSG00000031872"/>
<dbReference type="GeneTree" id="ENSGT00390000003283"/>
<dbReference type="HOGENOM" id="CLU_074372_0_0_1"/>
<dbReference type="InParanoid" id="Q9EQG5"/>
<dbReference type="BioGRID-ORCS" id="65115">
    <property type="hits" value="1 hit in 78 CRISPR screens"/>
</dbReference>
<dbReference type="ChiTaRS" id="Bean1">
    <property type="organism name" value="mouse"/>
</dbReference>
<dbReference type="PRO" id="PR:Q9EQG5"/>
<dbReference type="Proteomes" id="UP000000589">
    <property type="component" value="Chromosome 8"/>
</dbReference>
<dbReference type="RNAct" id="Q9EQG5">
    <property type="molecule type" value="protein"/>
</dbReference>
<dbReference type="Bgee" id="ENSMUSG00000031872">
    <property type="expression patterns" value="Expressed in lumbar dorsal root ganglion and 57 other cell types or tissues"/>
</dbReference>
<dbReference type="ExpressionAtlas" id="Q9EQG5">
    <property type="expression patterns" value="baseline and differential"/>
</dbReference>
<dbReference type="GO" id="GO:0016020">
    <property type="term" value="C:membrane"/>
    <property type="evidence" value="ECO:0007669"/>
    <property type="project" value="UniProtKB-SubCell"/>
</dbReference>
<dbReference type="InterPro" id="IPR039352">
    <property type="entry name" value="BEAN1"/>
</dbReference>
<dbReference type="PANTHER" id="PTHR36464">
    <property type="entry name" value="PROTEIN BEAN1"/>
    <property type="match status" value="1"/>
</dbReference>
<dbReference type="PANTHER" id="PTHR36464:SF1">
    <property type="entry name" value="PROTEIN BEAN1"/>
    <property type="match status" value="1"/>
</dbReference>
<feature type="chain" id="PRO_0000322541" description="Protein BEAN1">
    <location>
        <begin position="1"/>
        <end position="255"/>
    </location>
</feature>
<feature type="transmembrane region" description="Helical" evidence="1">
    <location>
        <begin position="37"/>
        <end position="57"/>
    </location>
</feature>
<feature type="region of interest" description="Disordered" evidence="2">
    <location>
        <begin position="69"/>
        <end position="109"/>
    </location>
</feature>
<feature type="region of interest" description="Disordered" evidence="2">
    <location>
        <begin position="160"/>
        <end position="255"/>
    </location>
</feature>
<feature type="compositionally biased region" description="Basic residues" evidence="2">
    <location>
        <begin position="69"/>
        <end position="90"/>
    </location>
</feature>
<feature type="compositionally biased region" description="Polar residues" evidence="2">
    <location>
        <begin position="193"/>
        <end position="206"/>
    </location>
</feature>
<feature type="compositionally biased region" description="Low complexity" evidence="2">
    <location>
        <begin position="217"/>
        <end position="226"/>
    </location>
</feature>
<feature type="compositionally biased region" description="Polar residues" evidence="2">
    <location>
        <begin position="234"/>
        <end position="243"/>
    </location>
</feature>
<feature type="compositionally biased region" description="Pro residues" evidence="2">
    <location>
        <begin position="244"/>
        <end position="255"/>
    </location>
</feature>
<feature type="splice variant" id="VSP_031912" description="In isoform 2." evidence="4">
    <location>
        <begin position="1"/>
        <end position="105"/>
    </location>
</feature>
<feature type="mutagenesis site" description="Impairs binding to NEDD4." evidence="3">
    <original>Y</original>
    <variation>A</variation>
    <location>
        <position position="144"/>
    </location>
</feature>
<feature type="mutagenesis site" description="Impairs binding to NEDD4." evidence="3">
    <original>Y</original>
    <variation>A</variation>
    <location>
        <position position="165"/>
    </location>
</feature>